<protein>
    <recommendedName>
        <fullName evidence="1">Small ribosomal subunit protein eS1</fullName>
    </recommendedName>
    <alternativeName>
        <fullName evidence="2">40S ribosomal protein S1</fullName>
    </alternativeName>
</protein>
<proteinExistence type="inferred from homology"/>
<name>RS3A_LACBS</name>
<feature type="initiator methionine" description="Removed" evidence="1">
    <location>
        <position position="1"/>
    </location>
</feature>
<feature type="chain" id="PRO_0000389380" description="Small ribosomal subunit protein eS1">
    <location>
        <begin position="2"/>
        <end position="256"/>
    </location>
</feature>
<feature type="modified residue" description="N-acetylalanine; partial" evidence="1">
    <location>
        <position position="2"/>
    </location>
</feature>
<reference key="1">
    <citation type="journal article" date="2008" name="Nature">
        <title>The genome of Laccaria bicolor provides insights into mycorrhizal symbiosis.</title>
        <authorList>
            <person name="Martin F."/>
            <person name="Aerts A."/>
            <person name="Ahren D."/>
            <person name="Brun A."/>
            <person name="Danchin E.G.J."/>
            <person name="Duchaussoy F."/>
            <person name="Gibon J."/>
            <person name="Kohler A."/>
            <person name="Lindquist E."/>
            <person name="Pereda V."/>
            <person name="Salamov A."/>
            <person name="Shapiro H.J."/>
            <person name="Wuyts J."/>
            <person name="Blaudez D."/>
            <person name="Buee M."/>
            <person name="Brokstein P."/>
            <person name="Canbaeck B."/>
            <person name="Cohen D."/>
            <person name="Courty P.E."/>
            <person name="Coutinho P.M."/>
            <person name="Delaruelle C."/>
            <person name="Detter J.C."/>
            <person name="Deveau A."/>
            <person name="DiFazio S."/>
            <person name="Duplessis S."/>
            <person name="Fraissinet-Tachet L."/>
            <person name="Lucic E."/>
            <person name="Frey-Klett P."/>
            <person name="Fourrey C."/>
            <person name="Feussner I."/>
            <person name="Gay G."/>
            <person name="Grimwood J."/>
            <person name="Hoegger P.J."/>
            <person name="Jain P."/>
            <person name="Kilaru S."/>
            <person name="Labbe J."/>
            <person name="Lin Y.C."/>
            <person name="Legue V."/>
            <person name="Le Tacon F."/>
            <person name="Marmeisse R."/>
            <person name="Melayah D."/>
            <person name="Montanini B."/>
            <person name="Muratet M."/>
            <person name="Nehls U."/>
            <person name="Niculita-Hirzel H."/>
            <person name="Oudot-Le Secq M.P."/>
            <person name="Peter M."/>
            <person name="Quesneville H."/>
            <person name="Rajashekar B."/>
            <person name="Reich M."/>
            <person name="Rouhier N."/>
            <person name="Schmutz J."/>
            <person name="Yin T."/>
            <person name="Chalot M."/>
            <person name="Henrissat B."/>
            <person name="Kuees U."/>
            <person name="Lucas S."/>
            <person name="Van de Peer Y."/>
            <person name="Podila G.K."/>
            <person name="Polle A."/>
            <person name="Pukkila P.J."/>
            <person name="Richardson P.M."/>
            <person name="Rouze P."/>
            <person name="Sanders I.R."/>
            <person name="Stajich J.E."/>
            <person name="Tunlid A."/>
            <person name="Tuskan G."/>
            <person name="Grigoriev I.V."/>
        </authorList>
    </citation>
    <scope>NUCLEOTIDE SEQUENCE [LARGE SCALE GENOMIC DNA]</scope>
    <source>
        <strain>S238N-H82 / ATCC MYA-4686</strain>
    </source>
</reference>
<keyword id="KW-0007">Acetylation</keyword>
<keyword id="KW-0963">Cytoplasm</keyword>
<keyword id="KW-1185">Reference proteome</keyword>
<keyword id="KW-0687">Ribonucleoprotein</keyword>
<keyword id="KW-0689">Ribosomal protein</keyword>
<evidence type="ECO:0000255" key="1">
    <source>
        <dbReference type="HAMAP-Rule" id="MF_03122"/>
    </source>
</evidence>
<evidence type="ECO:0000305" key="2"/>
<accession>B0CY45</accession>
<gene>
    <name evidence="1" type="primary">RPS1</name>
    <name type="ORF">LACBIDRAFT_183045</name>
</gene>
<comment type="subunit">
    <text evidence="1">Component of the small ribosomal subunit. Mature ribosomes consist of a small (40S) and a large (60S) subunit. The 40S subunit contains about 33 different proteins and 1 molecule of RNA (18S). The 60S subunit contains about 49 different proteins and 3 molecules of RNA (25S, 5.8S and 5S).</text>
</comment>
<comment type="subcellular location">
    <subcellularLocation>
        <location evidence="1">Cytoplasm</location>
    </subcellularLocation>
</comment>
<comment type="similarity">
    <text evidence="1">Belongs to the eukaryotic ribosomal protein eS1 family.</text>
</comment>
<comment type="sequence caution" evidence="2">
    <conflict type="erroneous gene model prediction">
        <sequence resource="EMBL-CDS" id="EDR12827"/>
    </conflict>
</comment>
<dbReference type="EMBL" id="DS547094">
    <property type="protein sequence ID" value="EDR12827.1"/>
    <property type="status" value="ALT_SEQ"/>
    <property type="molecule type" value="Genomic_DNA"/>
</dbReference>
<dbReference type="RefSeq" id="XP_001877091.1">
    <property type="nucleotide sequence ID" value="XM_001877056.1"/>
</dbReference>
<dbReference type="SMR" id="B0CY45"/>
<dbReference type="FunCoup" id="B0CY45">
    <property type="interactions" value="508"/>
</dbReference>
<dbReference type="STRING" id="486041.B0CY45"/>
<dbReference type="GeneID" id="6072607"/>
<dbReference type="KEGG" id="lbc:LACBIDRAFT_183045"/>
<dbReference type="HOGENOM" id="CLU_062507_0_0_1"/>
<dbReference type="InParanoid" id="B0CY45"/>
<dbReference type="OrthoDB" id="9834376at2759"/>
<dbReference type="Proteomes" id="UP000001194">
    <property type="component" value="Unassembled WGS sequence"/>
</dbReference>
<dbReference type="GO" id="GO:0022627">
    <property type="term" value="C:cytosolic small ribosomal subunit"/>
    <property type="evidence" value="ECO:0007669"/>
    <property type="project" value="UniProtKB-UniRule"/>
</dbReference>
<dbReference type="GO" id="GO:0003735">
    <property type="term" value="F:structural constituent of ribosome"/>
    <property type="evidence" value="ECO:0007669"/>
    <property type="project" value="UniProtKB-UniRule"/>
</dbReference>
<dbReference type="GO" id="GO:0006412">
    <property type="term" value="P:translation"/>
    <property type="evidence" value="ECO:0007669"/>
    <property type="project" value="UniProtKB-UniRule"/>
</dbReference>
<dbReference type="HAMAP" id="MF_03122">
    <property type="entry name" value="Ribosomal_eS1_euk"/>
    <property type="match status" value="1"/>
</dbReference>
<dbReference type="InterPro" id="IPR001593">
    <property type="entry name" value="Ribosomal_eS1"/>
</dbReference>
<dbReference type="InterPro" id="IPR018281">
    <property type="entry name" value="Ribosomal_eS1_CS"/>
</dbReference>
<dbReference type="InterPro" id="IPR027500">
    <property type="entry name" value="Ribosomal_eS1_euk"/>
</dbReference>
<dbReference type="PANTHER" id="PTHR11830">
    <property type="entry name" value="40S RIBOSOMAL PROTEIN S3A"/>
    <property type="match status" value="1"/>
</dbReference>
<dbReference type="Pfam" id="PF01015">
    <property type="entry name" value="Ribosomal_S3Ae"/>
    <property type="match status" value="1"/>
</dbReference>
<dbReference type="SMART" id="SM01397">
    <property type="entry name" value="Ribosomal_S3Ae"/>
    <property type="match status" value="1"/>
</dbReference>
<dbReference type="PROSITE" id="PS01191">
    <property type="entry name" value="RIBOSOMAL_S3AE"/>
    <property type="match status" value="1"/>
</dbReference>
<sequence>MAVGKNKRLSKGKKGIKKKVVDPFSRKDWYDIKAPSIFEVRNVGKTLANRSQGLKNANDSLKGRIIEVSLADLNKDEEQSFRKIKLRIDEIQGKNCLTNFHGMDFTSDKLRSLVRKWQTLVEAHVDVKTTDGYLLRLFAIGFTKRRPSQVRKTTYAQSSQVREIRKKMFEIMTREATNCDLKELVQKFVPEAIGREIEKAARSIYPLQNVYVRKAKILKSPKFDMSKLLELHGDSTDETGTRIAKDFKEPEILESV</sequence>
<organism>
    <name type="scientific">Laccaria bicolor (strain S238N-H82 / ATCC MYA-4686)</name>
    <name type="common">Bicoloured deceiver</name>
    <name type="synonym">Laccaria laccata var. bicolor</name>
    <dbReference type="NCBI Taxonomy" id="486041"/>
    <lineage>
        <taxon>Eukaryota</taxon>
        <taxon>Fungi</taxon>
        <taxon>Dikarya</taxon>
        <taxon>Basidiomycota</taxon>
        <taxon>Agaricomycotina</taxon>
        <taxon>Agaricomycetes</taxon>
        <taxon>Agaricomycetidae</taxon>
        <taxon>Agaricales</taxon>
        <taxon>Agaricineae</taxon>
        <taxon>Hydnangiaceae</taxon>
        <taxon>Laccaria</taxon>
    </lineage>
</organism>